<name>CTS32_CAEEL</name>
<dbReference type="EC" id="3.4.16.-" evidence="1"/>
<dbReference type="EMBL" id="BX284602">
    <property type="protein sequence ID" value="CAA91143.2"/>
    <property type="molecule type" value="Genomic_DNA"/>
</dbReference>
<dbReference type="PIR" id="T19106">
    <property type="entry name" value="T19106"/>
</dbReference>
<dbReference type="RefSeq" id="NP_001364589.1">
    <property type="nucleotide sequence ID" value="NM_001377839.2"/>
</dbReference>
<dbReference type="RefSeq" id="NP_496134.1">
    <property type="nucleotide sequence ID" value="NM_063733.1"/>
</dbReference>
<dbReference type="SMR" id="P52714"/>
<dbReference type="FunCoup" id="P52714">
    <property type="interactions" value="10"/>
</dbReference>
<dbReference type="STRING" id="6239.C08H9.1.1"/>
<dbReference type="ESTHER" id="caeel-c08h9.1">
    <property type="family name" value="Carboxypeptidase_S10"/>
</dbReference>
<dbReference type="MEROPS" id="S10.A56"/>
<dbReference type="GlyCosmos" id="P52714">
    <property type="glycosylation" value="1 site, No reported glycans"/>
</dbReference>
<dbReference type="iPTMnet" id="P52714"/>
<dbReference type="PaxDb" id="6239-C08H9.1"/>
<dbReference type="EnsemblMetazoa" id="C08H9.1.1">
    <property type="protein sequence ID" value="C08H9.1.1"/>
    <property type="gene ID" value="WBGene00007462"/>
</dbReference>
<dbReference type="GeneID" id="182429"/>
<dbReference type="UCSC" id="C08H9.1">
    <property type="organism name" value="c. elegans"/>
</dbReference>
<dbReference type="AGR" id="WB:WBGene00007462"/>
<dbReference type="WormBase" id="C08H9.1">
    <property type="protein sequence ID" value="CE54048"/>
    <property type="gene ID" value="WBGene00007462"/>
    <property type="gene designation" value="ctsa-3.2"/>
</dbReference>
<dbReference type="eggNOG" id="KOG1282">
    <property type="taxonomic scope" value="Eukaryota"/>
</dbReference>
<dbReference type="HOGENOM" id="CLU_008523_13_3_1"/>
<dbReference type="InParanoid" id="P52714"/>
<dbReference type="OrthoDB" id="443318at2759"/>
<dbReference type="PhylomeDB" id="P52714"/>
<dbReference type="Reactome" id="R-CEL-2132295">
    <property type="pathway name" value="MHC class II antigen presentation"/>
</dbReference>
<dbReference type="Reactome" id="R-CEL-6798695">
    <property type="pathway name" value="Neutrophil degranulation"/>
</dbReference>
<dbReference type="PRO" id="PR:P52714"/>
<dbReference type="Proteomes" id="UP000001940">
    <property type="component" value="Chromosome II"/>
</dbReference>
<dbReference type="Bgee" id="WBGene00007462">
    <property type="expression patterns" value="Expressed in larva and 1 other cell type or tissue"/>
</dbReference>
<dbReference type="GO" id="GO:0004185">
    <property type="term" value="F:serine-type carboxypeptidase activity"/>
    <property type="evidence" value="ECO:0000318"/>
    <property type="project" value="GO_Central"/>
</dbReference>
<dbReference type="GO" id="GO:0006508">
    <property type="term" value="P:proteolysis"/>
    <property type="evidence" value="ECO:0007669"/>
    <property type="project" value="UniProtKB-KW"/>
</dbReference>
<dbReference type="FunFam" id="3.40.50.1820:FF:000913">
    <property type="entry name" value="Uncharacterized serine carboxypeptidase C08H9.1"/>
    <property type="match status" value="1"/>
</dbReference>
<dbReference type="Gene3D" id="3.40.50.1820">
    <property type="entry name" value="alpha/beta hydrolase"/>
    <property type="match status" value="1"/>
</dbReference>
<dbReference type="InterPro" id="IPR029058">
    <property type="entry name" value="AB_hydrolase_fold"/>
</dbReference>
<dbReference type="InterPro" id="IPR001563">
    <property type="entry name" value="Peptidase_S10"/>
</dbReference>
<dbReference type="InterPro" id="IPR033124">
    <property type="entry name" value="Ser_caboxypep_his_AS"/>
</dbReference>
<dbReference type="InterPro" id="IPR018202">
    <property type="entry name" value="Ser_caboxypep_ser_AS"/>
</dbReference>
<dbReference type="PANTHER" id="PTHR11802:SF33">
    <property type="entry name" value="SERINE CARBOXYPEPTIDASE CTSA-3.2"/>
    <property type="match status" value="1"/>
</dbReference>
<dbReference type="PANTHER" id="PTHR11802">
    <property type="entry name" value="SERINE PROTEASE FAMILY S10 SERINE CARBOXYPEPTIDASE"/>
    <property type="match status" value="1"/>
</dbReference>
<dbReference type="Pfam" id="PF00450">
    <property type="entry name" value="Peptidase_S10"/>
    <property type="match status" value="1"/>
</dbReference>
<dbReference type="PRINTS" id="PR00724">
    <property type="entry name" value="CRBOXYPTASEC"/>
</dbReference>
<dbReference type="SUPFAM" id="SSF53474">
    <property type="entry name" value="alpha/beta-Hydrolases"/>
    <property type="match status" value="1"/>
</dbReference>
<dbReference type="PROSITE" id="PS00560">
    <property type="entry name" value="CARBOXYPEPT_SER_HIS"/>
    <property type="match status" value="1"/>
</dbReference>
<dbReference type="PROSITE" id="PS00131">
    <property type="entry name" value="CARBOXYPEPT_SER_SER"/>
    <property type="match status" value="1"/>
</dbReference>
<gene>
    <name evidence="6" type="primary">ctsa-3.2</name>
    <name evidence="6" type="ORF">C08H9.1</name>
</gene>
<proteinExistence type="evidence at protein level"/>
<comment type="similarity">
    <text evidence="5">Belongs to the peptidase S10 family.</text>
</comment>
<organism>
    <name type="scientific">Caenorhabditis elegans</name>
    <dbReference type="NCBI Taxonomy" id="6239"/>
    <lineage>
        <taxon>Eukaryota</taxon>
        <taxon>Metazoa</taxon>
        <taxon>Ecdysozoa</taxon>
        <taxon>Nematoda</taxon>
        <taxon>Chromadorea</taxon>
        <taxon>Rhabditida</taxon>
        <taxon>Rhabditina</taxon>
        <taxon>Rhabditomorpha</taxon>
        <taxon>Rhabditoidea</taxon>
        <taxon>Rhabditidae</taxon>
        <taxon>Peloderinae</taxon>
        <taxon>Caenorhabditis</taxon>
    </lineage>
</organism>
<accession>P52714</accession>
<feature type="signal peptide" evidence="2">
    <location>
        <begin position="1"/>
        <end position="21"/>
    </location>
</feature>
<feature type="chain" id="PRO_0000120568" description="Serine carboxypeptidase ctsa-3.2">
    <location>
        <begin position="22"/>
        <end position="517"/>
    </location>
</feature>
<feature type="active site" evidence="1">
    <location>
        <position position="172"/>
    </location>
</feature>
<feature type="active site" evidence="1">
    <location>
        <position position="418"/>
    </location>
</feature>
<feature type="active site" evidence="1">
    <location>
        <position position="485"/>
    </location>
</feature>
<feature type="glycosylation site" description="N-linked (GlcNAc...) asparagine" evidence="3 4">
    <location>
        <position position="269"/>
    </location>
</feature>
<evidence type="ECO:0000250" key="1">
    <source>
        <dbReference type="UniProtKB" id="P52719"/>
    </source>
</evidence>
<evidence type="ECO:0000255" key="2"/>
<evidence type="ECO:0000269" key="3">
    <source>
    </source>
</evidence>
<evidence type="ECO:0000269" key="4">
    <source>
    </source>
</evidence>
<evidence type="ECO:0000305" key="5"/>
<evidence type="ECO:0000312" key="6">
    <source>
        <dbReference type="WormBase" id="C08H9.1"/>
    </source>
</evidence>
<sequence length="517" mass="59026">MWWTSLVFSVLLFDLIFISNCDYIHLPGNSDIPDLKLQSGYLNANENGTQKMFYFLLEARDIPVGEASLIIWFNGGPGCSSLSAFFEEFGPLYVNFGGKSLFENVHSWYHKANILFLESPIGVGFSYDTEQSNFTKVNDDSIAEQNFNSVIDFFQRKHSSYVNHDFFIAAESYGGVYGPMLSALVVDSISKREFPNENFKGLIIGNGFMNVKLSTNTMILWSAYHDRTSPDEWDEIKEKCATSGAHDVDYYDFMQFMKTTNKMDYLADNSTECGRLIEPLLGQFSETFDGYDFFNYYHDCYTNFSIPNATDPIKETLAQIPRRRISALFNKHSTDGQASYRCWADDALHKYLNLKEVQNALGIDRAWKDRKKKWEVCNMPIYDQYVMTHQDMTPFFSKIFDKFTGPAFRVLIYSGDIDTACNYLADGYFVRDLASIHGFKKTLKHGPWYHSEHKVIAGNFMRYEGANHLGSKLSIDVVTVKGSGHFVPLDRPGPALQMVHNFLTGKPGKMTNYTSPV</sequence>
<reference key="1">
    <citation type="journal article" date="1998" name="Science">
        <title>Genome sequence of the nematode C. elegans: a platform for investigating biology.</title>
        <authorList>
            <consortium name="The C. elegans sequencing consortium"/>
        </authorList>
    </citation>
    <scope>NUCLEOTIDE SEQUENCE [LARGE SCALE GENOMIC DNA]</scope>
    <source>
        <strain>Bristol N2</strain>
    </source>
</reference>
<reference key="2">
    <citation type="journal article" date="2003" name="Nat. Biotechnol.">
        <title>Lectin affinity capture, isotope-coded tagging and mass spectrometry to identify N-linked glycoproteins.</title>
        <authorList>
            <person name="Kaji H."/>
            <person name="Saito H."/>
            <person name="Yamauchi Y."/>
            <person name="Shinkawa T."/>
            <person name="Taoka M."/>
            <person name="Hirabayashi J."/>
            <person name="Kasai K."/>
            <person name="Takahashi N."/>
            <person name="Isobe T."/>
        </authorList>
    </citation>
    <scope>GLYCOSYLATION [LARGE SCALE ANALYSIS] AT ASN-269</scope>
    <scope>IDENTIFICATION BY MASS SPECTROMETRY</scope>
    <source>
        <strain>Bristol N2</strain>
    </source>
</reference>
<reference key="3">
    <citation type="journal article" date="2007" name="Mol. Cell. Proteomics">
        <title>Proteomics reveals N-linked glycoprotein diversity in Caenorhabditis elegans and suggests an atypical translocation mechanism for integral membrane proteins.</title>
        <authorList>
            <person name="Kaji H."/>
            <person name="Kamiie J."/>
            <person name="Kawakami H."/>
            <person name="Kido K."/>
            <person name="Yamauchi Y."/>
            <person name="Shinkawa T."/>
            <person name="Taoka M."/>
            <person name="Takahashi N."/>
            <person name="Isobe T."/>
        </authorList>
    </citation>
    <scope>GLYCOSYLATION [LARGE SCALE ANALYSIS] AT ASN-269</scope>
    <scope>IDENTIFICATION BY MASS SPECTROMETRY</scope>
    <source>
        <strain>Bristol N2</strain>
    </source>
</reference>
<keyword id="KW-0121">Carboxypeptidase</keyword>
<keyword id="KW-0325">Glycoprotein</keyword>
<keyword id="KW-0378">Hydrolase</keyword>
<keyword id="KW-0645">Protease</keyword>
<keyword id="KW-1185">Reference proteome</keyword>
<keyword id="KW-0732">Signal</keyword>
<protein>
    <recommendedName>
        <fullName evidence="5">Serine carboxypeptidase ctsa-3.2</fullName>
        <ecNumber evidence="1">3.4.16.-</ecNumber>
    </recommendedName>
</protein>